<feature type="chain" id="PRO_0000179743" description="ATP-dependent Clp protease proteolytic subunit">
    <location>
        <begin position="1"/>
        <end position="216"/>
    </location>
</feature>
<feature type="active site" description="Nucleophile" evidence="1">
    <location>
        <position position="101"/>
    </location>
</feature>
<feature type="active site" evidence="1">
    <location>
        <position position="126"/>
    </location>
</feature>
<proteinExistence type="inferred from homology"/>
<gene>
    <name evidence="1" type="primary">clpP</name>
</gene>
<geneLocation type="chloroplast"/>
<reference key="1">
    <citation type="journal article" date="1995" name="J. Mol. Biol.">
        <title>Complete sequence of the maize chloroplast genome: gene content, hotspots of divergence and fine tuning of genetic information by transcript editing.</title>
        <authorList>
            <person name="Maier R.M."/>
            <person name="Neckermann K."/>
            <person name="Igloi G.L."/>
            <person name="Koessel H."/>
        </authorList>
    </citation>
    <scope>NUCLEOTIDE SEQUENCE [LARGE SCALE GENOMIC DNA]</scope>
    <source>
        <strain>cv. B73</strain>
    </source>
</reference>
<reference key="2">
    <citation type="journal article" date="1992" name="Plant Mol. Biol.">
        <title>Nucleotide sequence of a region of maize chloroplast DNA containing the 3' end of clpP, exon 1 of rps12 and rpl20 and their cotranscription.</title>
        <authorList>
            <person name="Weglohner W."/>
            <person name="Subramanian A.R."/>
        </authorList>
    </citation>
    <scope>NUCLEOTIDE SEQUENCE [LARGE SCALE GENOMIC DNA] OF 186-216</scope>
    <source>
        <strain>cv. B73</strain>
        <tissue>Leaf</tissue>
    </source>
</reference>
<reference key="3">
    <citation type="journal article" date="1987" name="J. Biol. Chem.">
        <title>Nucleotide sequence, promoter analysis, and linkage mapping of the unusually organized operon encoding ribosomal proteins S7 and S12 in maize chloroplast.</title>
        <authorList>
            <person name="Giese K."/>
            <person name="Subramanian A.R."/>
            <person name="Larrinua I.M."/>
            <person name="Bogorad L."/>
        </authorList>
    </citation>
    <scope>NUCLEOTIDE SEQUENCE [LARGE SCALE GENOMIC DNA] OF 189-216</scope>
    <source>
        <strain>cv. B73</strain>
        <tissue>Leaf</tissue>
    </source>
</reference>
<accession>P26567</accession>
<protein>
    <recommendedName>
        <fullName evidence="1">ATP-dependent Clp protease proteolytic subunit</fullName>
        <ecNumber evidence="1">3.4.21.92</ecNumber>
    </recommendedName>
    <alternativeName>
        <fullName evidence="1">Endopeptidase Clp</fullName>
    </alternativeName>
</protein>
<sequence length="216" mass="24759">MPIGVPKVPYRIPGDEEATWVDLYNVMYRERTLFLGQEIRCEITNHITGLMVYLSIEDGNSDIFLFINSLGGWLISGMAIFDTMQTVTPDIYTICLGIAASMASFILLGGEPTKRIAFPHARIMLHQPASAYYRARTPEFLLEVEELHKVREMITRVYALRTGKPFWVVSEDMERDVFMSADEAKAYGLVDIVGDEMIDEHCDTDPVWFPEMFKDW</sequence>
<name>CLPP_MAIZE</name>
<evidence type="ECO:0000255" key="1">
    <source>
        <dbReference type="HAMAP-Rule" id="MF_00444"/>
    </source>
</evidence>
<comment type="function">
    <text evidence="1">Cleaves peptides in various proteins in a process that requires ATP hydrolysis. Has a chymotrypsin-like activity. Plays a major role in the degradation of misfolded proteins.</text>
</comment>
<comment type="catalytic activity">
    <reaction evidence="1">
        <text>Hydrolysis of proteins to small peptides in the presence of ATP and magnesium. alpha-casein is the usual test substrate. In the absence of ATP, only oligopeptides shorter than five residues are hydrolyzed (such as succinyl-Leu-Tyr-|-NHMec, and Leu-Tyr-Leu-|-Tyr-Trp, in which cleavage of the -Tyr-|-Leu- and -Tyr-|-Trp bonds also occurs).</text>
        <dbReference type="EC" id="3.4.21.92"/>
    </reaction>
</comment>
<comment type="subunit">
    <text>Component of the chloroplastic Clp protease core complex.</text>
</comment>
<comment type="subcellular location">
    <subcellularLocation>
        <location evidence="1">Plastid</location>
        <location evidence="1">Chloroplast stroma</location>
    </subcellularLocation>
</comment>
<comment type="similarity">
    <text evidence="1">Belongs to the peptidase S14 family.</text>
</comment>
<organism>
    <name type="scientific">Zea mays</name>
    <name type="common">Maize</name>
    <dbReference type="NCBI Taxonomy" id="4577"/>
    <lineage>
        <taxon>Eukaryota</taxon>
        <taxon>Viridiplantae</taxon>
        <taxon>Streptophyta</taxon>
        <taxon>Embryophyta</taxon>
        <taxon>Tracheophyta</taxon>
        <taxon>Spermatophyta</taxon>
        <taxon>Magnoliopsida</taxon>
        <taxon>Liliopsida</taxon>
        <taxon>Poales</taxon>
        <taxon>Poaceae</taxon>
        <taxon>PACMAD clade</taxon>
        <taxon>Panicoideae</taxon>
        <taxon>Andropogonodae</taxon>
        <taxon>Andropogoneae</taxon>
        <taxon>Tripsacinae</taxon>
        <taxon>Zea</taxon>
    </lineage>
</organism>
<keyword id="KW-0150">Chloroplast</keyword>
<keyword id="KW-0378">Hydrolase</keyword>
<keyword id="KW-0934">Plastid</keyword>
<keyword id="KW-0645">Protease</keyword>
<keyword id="KW-1185">Reference proteome</keyword>
<keyword id="KW-0720">Serine protease</keyword>
<dbReference type="EC" id="3.4.21.92" evidence="1"/>
<dbReference type="EMBL" id="X86563">
    <property type="protein sequence ID" value="CAA60310.1"/>
    <property type="molecule type" value="Genomic_DNA"/>
</dbReference>
<dbReference type="EMBL" id="X60548">
    <property type="protein sequence ID" value="CAA43038.1"/>
    <property type="molecule type" value="Genomic_DNA"/>
</dbReference>
<dbReference type="EMBL" id="M17842">
    <property type="protein sequence ID" value="AAA85358.1"/>
    <property type="molecule type" value="Genomic_DNA"/>
</dbReference>
<dbReference type="PIR" id="S58576">
    <property type="entry name" value="S58576"/>
</dbReference>
<dbReference type="RefSeq" id="NP_043048.1">
    <property type="nucleotide sequence ID" value="NC_001666.2"/>
</dbReference>
<dbReference type="SMR" id="P26567"/>
<dbReference type="FunCoup" id="P26567">
    <property type="interactions" value="11"/>
</dbReference>
<dbReference type="STRING" id="4577.P26567"/>
<dbReference type="MEROPS" id="S14.002"/>
<dbReference type="PaxDb" id="4577-GRMZM5G804708_P01"/>
<dbReference type="GeneID" id="845176"/>
<dbReference type="KEGG" id="zma:845176"/>
<dbReference type="MaizeGDB" id="67210"/>
<dbReference type="eggNOG" id="KOG0840">
    <property type="taxonomic scope" value="Eukaryota"/>
</dbReference>
<dbReference type="HOGENOM" id="CLU_058707_4_2_1"/>
<dbReference type="InParanoid" id="P26567"/>
<dbReference type="OMA" id="WVDVYNR"/>
<dbReference type="OrthoDB" id="1875263at2759"/>
<dbReference type="Proteomes" id="UP000007305">
    <property type="component" value="Chloroplast"/>
</dbReference>
<dbReference type="ExpressionAtlas" id="P26567">
    <property type="expression patterns" value="baseline"/>
</dbReference>
<dbReference type="GO" id="GO:0009570">
    <property type="term" value="C:chloroplast stroma"/>
    <property type="evidence" value="ECO:0007669"/>
    <property type="project" value="UniProtKB-SubCell"/>
</dbReference>
<dbReference type="GO" id="GO:0009368">
    <property type="term" value="C:endopeptidase Clp complex"/>
    <property type="evidence" value="ECO:0000318"/>
    <property type="project" value="GO_Central"/>
</dbReference>
<dbReference type="GO" id="GO:0004176">
    <property type="term" value="F:ATP-dependent peptidase activity"/>
    <property type="evidence" value="ECO:0000318"/>
    <property type="project" value="GO_Central"/>
</dbReference>
<dbReference type="GO" id="GO:0051117">
    <property type="term" value="F:ATPase binding"/>
    <property type="evidence" value="ECO:0000318"/>
    <property type="project" value="GO_Central"/>
</dbReference>
<dbReference type="GO" id="GO:0004252">
    <property type="term" value="F:serine-type endopeptidase activity"/>
    <property type="evidence" value="ECO:0000318"/>
    <property type="project" value="GO_Central"/>
</dbReference>
<dbReference type="GO" id="GO:0006515">
    <property type="term" value="P:protein quality control for misfolded or incompletely synthesized proteins"/>
    <property type="evidence" value="ECO:0000318"/>
    <property type="project" value="GO_Central"/>
</dbReference>
<dbReference type="CDD" id="cd07017">
    <property type="entry name" value="S14_ClpP_2"/>
    <property type="match status" value="1"/>
</dbReference>
<dbReference type="FunFam" id="3.90.226.10:FF:000006">
    <property type="entry name" value="ATP-dependent Clp protease proteolytic subunit"/>
    <property type="match status" value="1"/>
</dbReference>
<dbReference type="Gene3D" id="3.90.226.10">
    <property type="entry name" value="2-enoyl-CoA Hydratase, Chain A, domain 1"/>
    <property type="match status" value="1"/>
</dbReference>
<dbReference type="HAMAP" id="MF_00444">
    <property type="entry name" value="ClpP"/>
    <property type="match status" value="1"/>
</dbReference>
<dbReference type="InterPro" id="IPR001907">
    <property type="entry name" value="ClpP"/>
</dbReference>
<dbReference type="InterPro" id="IPR029045">
    <property type="entry name" value="ClpP/crotonase-like_dom_sf"/>
</dbReference>
<dbReference type="InterPro" id="IPR023562">
    <property type="entry name" value="ClpP/TepA"/>
</dbReference>
<dbReference type="InterPro" id="IPR033135">
    <property type="entry name" value="ClpP_His_AS"/>
</dbReference>
<dbReference type="InterPro" id="IPR018215">
    <property type="entry name" value="ClpP_Ser_AS"/>
</dbReference>
<dbReference type="PANTHER" id="PTHR48481">
    <property type="entry name" value="ATP-DEPENDENT CLP PROTEASE PROTEOLYTIC SUBUNIT"/>
    <property type="match status" value="1"/>
</dbReference>
<dbReference type="PANTHER" id="PTHR48481:SF1">
    <property type="entry name" value="ATP-DEPENDENT CLP PROTEASE PROTEOLYTIC SUBUNIT"/>
    <property type="match status" value="1"/>
</dbReference>
<dbReference type="Pfam" id="PF00574">
    <property type="entry name" value="CLP_protease"/>
    <property type="match status" value="1"/>
</dbReference>
<dbReference type="PRINTS" id="PR00127">
    <property type="entry name" value="CLPPROTEASEP"/>
</dbReference>
<dbReference type="SUPFAM" id="SSF52096">
    <property type="entry name" value="ClpP/crotonase"/>
    <property type="match status" value="1"/>
</dbReference>
<dbReference type="PROSITE" id="PS00382">
    <property type="entry name" value="CLP_PROTEASE_HIS"/>
    <property type="match status" value="1"/>
</dbReference>
<dbReference type="PROSITE" id="PS00381">
    <property type="entry name" value="CLP_PROTEASE_SER"/>
    <property type="match status" value="1"/>
</dbReference>